<feature type="chain" id="PRO_0000323895" description="Uridylate kinase">
    <location>
        <begin position="1"/>
        <end position="236"/>
    </location>
</feature>
<feature type="binding site" evidence="1">
    <location>
        <begin position="8"/>
        <end position="11"/>
    </location>
    <ligand>
        <name>ATP</name>
        <dbReference type="ChEBI" id="CHEBI:30616"/>
    </ligand>
</feature>
<feature type="binding site" evidence="1">
    <location>
        <position position="51"/>
    </location>
    <ligand>
        <name>UMP</name>
        <dbReference type="ChEBI" id="CHEBI:57865"/>
    </ligand>
</feature>
<feature type="binding site" evidence="1">
    <location>
        <position position="52"/>
    </location>
    <ligand>
        <name>ATP</name>
        <dbReference type="ChEBI" id="CHEBI:30616"/>
    </ligand>
</feature>
<feature type="binding site" evidence="1">
    <location>
        <position position="56"/>
    </location>
    <ligand>
        <name>ATP</name>
        <dbReference type="ChEBI" id="CHEBI:30616"/>
    </ligand>
</feature>
<feature type="binding site" evidence="1">
    <location>
        <position position="71"/>
    </location>
    <ligand>
        <name>UMP</name>
        <dbReference type="ChEBI" id="CHEBI:57865"/>
    </ligand>
</feature>
<feature type="binding site" evidence="1">
    <location>
        <begin position="133"/>
        <end position="140"/>
    </location>
    <ligand>
        <name>UMP</name>
        <dbReference type="ChEBI" id="CHEBI:57865"/>
    </ligand>
</feature>
<feature type="binding site" evidence="1">
    <location>
        <position position="161"/>
    </location>
    <ligand>
        <name>ATP</name>
        <dbReference type="ChEBI" id="CHEBI:30616"/>
    </ligand>
</feature>
<feature type="binding site" evidence="1">
    <location>
        <position position="167"/>
    </location>
    <ligand>
        <name>ATP</name>
        <dbReference type="ChEBI" id="CHEBI:30616"/>
    </ligand>
</feature>
<feature type="binding site" evidence="1">
    <location>
        <position position="170"/>
    </location>
    <ligand>
        <name>ATP</name>
        <dbReference type="ChEBI" id="CHEBI:30616"/>
    </ligand>
</feature>
<gene>
    <name evidence="1" type="primary">pyrH</name>
    <name type="ordered locus">MHP7448_0535</name>
</gene>
<reference key="1">
    <citation type="journal article" date="2005" name="J. Bacteriol.">
        <title>Swine and poultry pathogens: the complete genome sequences of two strains of Mycoplasma hyopneumoniae and a strain of Mycoplasma synoviae.</title>
        <authorList>
            <person name="Vasconcelos A.T.R."/>
            <person name="Ferreira H.B."/>
            <person name="Bizarro C.V."/>
            <person name="Bonatto S.L."/>
            <person name="Carvalho M.O."/>
            <person name="Pinto P.M."/>
            <person name="Almeida D.F."/>
            <person name="Almeida L.G.P."/>
            <person name="Almeida R."/>
            <person name="Alves-Junior L."/>
            <person name="Assuncao E.N."/>
            <person name="Azevedo V.A.C."/>
            <person name="Bogo M.R."/>
            <person name="Brigido M.M."/>
            <person name="Brocchi M."/>
            <person name="Burity H.A."/>
            <person name="Camargo A.A."/>
            <person name="Camargo S.S."/>
            <person name="Carepo M.S."/>
            <person name="Carraro D.M."/>
            <person name="de Mattos Cascardo J.C."/>
            <person name="Castro L.A."/>
            <person name="Cavalcanti G."/>
            <person name="Chemale G."/>
            <person name="Collevatti R.G."/>
            <person name="Cunha C.W."/>
            <person name="Dallagiovanna B."/>
            <person name="Dambros B.P."/>
            <person name="Dellagostin O.A."/>
            <person name="Falcao C."/>
            <person name="Fantinatti-Garboggini F."/>
            <person name="Felipe M.S.S."/>
            <person name="Fiorentin L."/>
            <person name="Franco G.R."/>
            <person name="Freitas N.S.A."/>
            <person name="Frias D."/>
            <person name="Grangeiro T.B."/>
            <person name="Grisard E.C."/>
            <person name="Guimaraes C.T."/>
            <person name="Hungria M."/>
            <person name="Jardim S.N."/>
            <person name="Krieger M.A."/>
            <person name="Laurino J.P."/>
            <person name="Lima L.F.A."/>
            <person name="Lopes M.I."/>
            <person name="Loreto E.L.S."/>
            <person name="Madeira H.M.F."/>
            <person name="Manfio G.P."/>
            <person name="Maranhao A.Q."/>
            <person name="Martinkovics C.T."/>
            <person name="Medeiros S.R.B."/>
            <person name="Moreira M.A.M."/>
            <person name="Neiva M."/>
            <person name="Ramalho-Neto C.E."/>
            <person name="Nicolas M.F."/>
            <person name="Oliveira S.C."/>
            <person name="Paixao R.F.C."/>
            <person name="Pedrosa F.O."/>
            <person name="Pena S.D.J."/>
            <person name="Pereira M."/>
            <person name="Pereira-Ferrari L."/>
            <person name="Piffer I."/>
            <person name="Pinto L.S."/>
            <person name="Potrich D.P."/>
            <person name="Salim A.C.M."/>
            <person name="Santos F.R."/>
            <person name="Schmitt R."/>
            <person name="Schneider M.P.C."/>
            <person name="Schrank A."/>
            <person name="Schrank I.S."/>
            <person name="Schuck A.F."/>
            <person name="Seuanez H.N."/>
            <person name="Silva D.W."/>
            <person name="Silva R."/>
            <person name="Silva S.C."/>
            <person name="Soares C.M.A."/>
            <person name="Souza K.R.L."/>
            <person name="Souza R.C."/>
            <person name="Staats C.C."/>
            <person name="Steffens M.B.R."/>
            <person name="Teixeira S.M.R."/>
            <person name="Urmenyi T.P."/>
            <person name="Vainstein M.H."/>
            <person name="Zuccherato L.W."/>
            <person name="Simpson A.J.G."/>
            <person name="Zaha A."/>
        </authorList>
    </citation>
    <scope>NUCLEOTIDE SEQUENCE [LARGE SCALE GENOMIC DNA]</scope>
    <source>
        <strain>7448</strain>
    </source>
</reference>
<name>PYRH_MESH7</name>
<protein>
    <recommendedName>
        <fullName evidence="1">Uridylate kinase</fullName>
        <shortName evidence="1">UK</shortName>
        <ecNumber evidence="1">2.7.4.22</ecNumber>
    </recommendedName>
    <alternativeName>
        <fullName evidence="1">Uridine monophosphate kinase</fullName>
        <shortName evidence="1">UMP kinase</shortName>
        <shortName evidence="1">UMPK</shortName>
    </alternativeName>
</protein>
<comment type="function">
    <text evidence="1">Catalyzes the reversible phosphorylation of UMP to UDP.</text>
</comment>
<comment type="catalytic activity">
    <reaction evidence="1">
        <text>UMP + ATP = UDP + ADP</text>
        <dbReference type="Rhea" id="RHEA:24400"/>
        <dbReference type="ChEBI" id="CHEBI:30616"/>
        <dbReference type="ChEBI" id="CHEBI:57865"/>
        <dbReference type="ChEBI" id="CHEBI:58223"/>
        <dbReference type="ChEBI" id="CHEBI:456216"/>
        <dbReference type="EC" id="2.7.4.22"/>
    </reaction>
</comment>
<comment type="activity regulation">
    <text evidence="1">Inhibited by UTP.</text>
</comment>
<comment type="pathway">
    <text evidence="1">Pyrimidine metabolism; CTP biosynthesis via de novo pathway; UDP from UMP (UMPK route): step 1/1.</text>
</comment>
<comment type="subunit">
    <text evidence="1">Homohexamer.</text>
</comment>
<comment type="subcellular location">
    <subcellularLocation>
        <location evidence="1">Cytoplasm</location>
    </subcellularLocation>
</comment>
<comment type="similarity">
    <text evidence="1">Belongs to the UMP kinase family.</text>
</comment>
<keyword id="KW-0067">ATP-binding</keyword>
<keyword id="KW-0963">Cytoplasm</keyword>
<keyword id="KW-0418">Kinase</keyword>
<keyword id="KW-0547">Nucleotide-binding</keyword>
<keyword id="KW-0665">Pyrimidine biosynthesis</keyword>
<keyword id="KW-0808">Transferase</keyword>
<accession>Q4A7I8</accession>
<evidence type="ECO:0000255" key="1">
    <source>
        <dbReference type="HAMAP-Rule" id="MF_01220"/>
    </source>
</evidence>
<organism>
    <name type="scientific">Mesomycoplasma hyopneumoniae (strain 7448)</name>
    <name type="common">Mycoplasma hyopneumoniae</name>
    <dbReference type="NCBI Taxonomy" id="262722"/>
    <lineage>
        <taxon>Bacteria</taxon>
        <taxon>Bacillati</taxon>
        <taxon>Mycoplasmatota</taxon>
        <taxon>Mycoplasmoidales</taxon>
        <taxon>Metamycoplasmataceae</taxon>
        <taxon>Mesomycoplasma</taxon>
    </lineage>
</organism>
<dbReference type="EC" id="2.7.4.22" evidence="1"/>
<dbReference type="EMBL" id="AE017244">
    <property type="protein sequence ID" value="AAZ53901.1"/>
    <property type="molecule type" value="Genomic_DNA"/>
</dbReference>
<dbReference type="RefSeq" id="WP_011206385.1">
    <property type="nucleotide sequence ID" value="NC_007332.1"/>
</dbReference>
<dbReference type="SMR" id="Q4A7I8"/>
<dbReference type="GeneID" id="41334835"/>
<dbReference type="KEGG" id="mhp:MHP7448_0535"/>
<dbReference type="HOGENOM" id="CLU_033861_0_1_14"/>
<dbReference type="UniPathway" id="UPA00159">
    <property type="reaction ID" value="UER00275"/>
</dbReference>
<dbReference type="Proteomes" id="UP000000553">
    <property type="component" value="Chromosome"/>
</dbReference>
<dbReference type="GO" id="GO:0005737">
    <property type="term" value="C:cytoplasm"/>
    <property type="evidence" value="ECO:0007669"/>
    <property type="project" value="UniProtKB-SubCell"/>
</dbReference>
<dbReference type="GO" id="GO:0005524">
    <property type="term" value="F:ATP binding"/>
    <property type="evidence" value="ECO:0007669"/>
    <property type="project" value="UniProtKB-KW"/>
</dbReference>
<dbReference type="GO" id="GO:0033862">
    <property type="term" value="F:UMP kinase activity"/>
    <property type="evidence" value="ECO:0007669"/>
    <property type="project" value="UniProtKB-EC"/>
</dbReference>
<dbReference type="GO" id="GO:0044210">
    <property type="term" value="P:'de novo' CTP biosynthetic process"/>
    <property type="evidence" value="ECO:0007669"/>
    <property type="project" value="UniProtKB-UniRule"/>
</dbReference>
<dbReference type="GO" id="GO:0006225">
    <property type="term" value="P:UDP biosynthetic process"/>
    <property type="evidence" value="ECO:0007669"/>
    <property type="project" value="TreeGrafter"/>
</dbReference>
<dbReference type="CDD" id="cd04254">
    <property type="entry name" value="AAK_UMPK-PyrH-Ec"/>
    <property type="match status" value="1"/>
</dbReference>
<dbReference type="FunFam" id="3.40.1160.10:FF:000001">
    <property type="entry name" value="Uridylate kinase"/>
    <property type="match status" value="1"/>
</dbReference>
<dbReference type="Gene3D" id="3.40.1160.10">
    <property type="entry name" value="Acetylglutamate kinase-like"/>
    <property type="match status" value="1"/>
</dbReference>
<dbReference type="HAMAP" id="MF_01220_B">
    <property type="entry name" value="PyrH_B"/>
    <property type="match status" value="1"/>
</dbReference>
<dbReference type="InterPro" id="IPR036393">
    <property type="entry name" value="AceGlu_kinase-like_sf"/>
</dbReference>
<dbReference type="InterPro" id="IPR001048">
    <property type="entry name" value="Asp/Glu/Uridylate_kinase"/>
</dbReference>
<dbReference type="InterPro" id="IPR011817">
    <property type="entry name" value="Uridylate_kinase"/>
</dbReference>
<dbReference type="InterPro" id="IPR015963">
    <property type="entry name" value="Uridylate_kinase_bac"/>
</dbReference>
<dbReference type="NCBIfam" id="TIGR02075">
    <property type="entry name" value="pyrH_bact"/>
    <property type="match status" value="1"/>
</dbReference>
<dbReference type="PANTHER" id="PTHR42833">
    <property type="entry name" value="URIDYLATE KINASE"/>
    <property type="match status" value="1"/>
</dbReference>
<dbReference type="PANTHER" id="PTHR42833:SF4">
    <property type="entry name" value="URIDYLATE KINASE PUMPKIN, CHLOROPLASTIC"/>
    <property type="match status" value="1"/>
</dbReference>
<dbReference type="Pfam" id="PF00696">
    <property type="entry name" value="AA_kinase"/>
    <property type="match status" value="1"/>
</dbReference>
<dbReference type="PIRSF" id="PIRSF005650">
    <property type="entry name" value="Uridylate_kin"/>
    <property type="match status" value="1"/>
</dbReference>
<dbReference type="SUPFAM" id="SSF53633">
    <property type="entry name" value="Carbamate kinase-like"/>
    <property type="match status" value="1"/>
</dbReference>
<sequence length="236" mass="26319">MDSTILIKLSGESLANKQKSLAIDYELVRQIGSQLKEIQNLGHKILIVIGGGNFWRGTSAAKNGINRNTADYIGMLGTVMNGLALDSVFRDLGIKTRVLSSMSLDPRICEYFVREKAMKYLEDNNVLIFVGGTGRPFFTTDSAATLFASEMGANIILVGKNNVNGIFDSDPKINPNALRYDKITYNQVIEKNLKVMDSTAFSMARDNKIKLLIFDIKEKNSISKLIKRQIKHTEVY</sequence>
<proteinExistence type="inferred from homology"/>